<proteinExistence type="inferred from homology"/>
<sequence>MTELNKLSVADSLKGLKNKEFTSKELVNAHIKQIEKHKNLNAYVTETFDLALKQAEEADQSYAKNHSRTLEGIPFAAKDLFCTKGIRTTACSNILREFIPNYESGVTQNIFNKGGVMLGKTNMDEFAMGSANITSCFGNVISPWKALDDGADLVPGGSSGGSAAAVSGFMATAALGSDTGGSVRQPASFTGLVGFKPTYGRCSRYGMVSFASSLDQAGIFTRSVLDSSIMLEAMIGFDERDSTSIKMEVPQLQPAIGSSIKGMKIGVPLSLGEGGIIEPDIMKMWHSTIELLKDAGAEIIDISLPHTKYGVAVYYVIAPAEASSNLSRYDGVRYGLRVEKENMSLDEMYEITRSSGFGDEVKRRIMIGTYVLSSSFMDAYYLKAQKVRRLVADDFNNAFAKVDAILLPSAPTEAFRIGEKQNDPTITYLNDLFTIPASLAGLPCVSVPAGLSNRGLPLGMQVIGKQLDEYNVLRVASAIEAGVKHIKFEPVGF</sequence>
<protein>
    <recommendedName>
        <fullName evidence="1">Glutamyl-tRNA(Gln) amidotransferase subunit A</fullName>
        <shortName evidence="1">Glu-ADT subunit A</shortName>
        <ecNumber evidence="1">6.3.5.7</ecNumber>
    </recommendedName>
</protein>
<feature type="chain" id="PRO_0000241148" description="Glutamyl-tRNA(Gln) amidotransferase subunit A">
    <location>
        <begin position="1"/>
        <end position="493"/>
    </location>
</feature>
<feature type="active site" description="Charge relay system" evidence="1">
    <location>
        <position position="78"/>
    </location>
</feature>
<feature type="active site" description="Charge relay system" evidence="1">
    <location>
        <position position="158"/>
    </location>
</feature>
<feature type="active site" description="Acyl-ester intermediate" evidence="1">
    <location>
        <position position="182"/>
    </location>
</feature>
<organism>
    <name type="scientific">Rickettsia bellii (strain RML369-C)</name>
    <dbReference type="NCBI Taxonomy" id="336407"/>
    <lineage>
        <taxon>Bacteria</taxon>
        <taxon>Pseudomonadati</taxon>
        <taxon>Pseudomonadota</taxon>
        <taxon>Alphaproteobacteria</taxon>
        <taxon>Rickettsiales</taxon>
        <taxon>Rickettsiaceae</taxon>
        <taxon>Rickettsieae</taxon>
        <taxon>Rickettsia</taxon>
        <taxon>belli group</taxon>
    </lineage>
</organism>
<dbReference type="EC" id="6.3.5.7" evidence="1"/>
<dbReference type="EMBL" id="CP000087">
    <property type="protein sequence ID" value="ABE05215.1"/>
    <property type="molecule type" value="Genomic_DNA"/>
</dbReference>
<dbReference type="RefSeq" id="WP_011477793.1">
    <property type="nucleotide sequence ID" value="NC_007940.1"/>
</dbReference>
<dbReference type="SMR" id="Q1RHE9"/>
<dbReference type="KEGG" id="rbe:RBE_1134"/>
<dbReference type="eggNOG" id="COG0154">
    <property type="taxonomic scope" value="Bacteria"/>
</dbReference>
<dbReference type="HOGENOM" id="CLU_009600_0_3_5"/>
<dbReference type="OrthoDB" id="9811471at2"/>
<dbReference type="Proteomes" id="UP000001951">
    <property type="component" value="Chromosome"/>
</dbReference>
<dbReference type="GO" id="GO:0030956">
    <property type="term" value="C:glutamyl-tRNA(Gln) amidotransferase complex"/>
    <property type="evidence" value="ECO:0007669"/>
    <property type="project" value="InterPro"/>
</dbReference>
<dbReference type="GO" id="GO:0005524">
    <property type="term" value="F:ATP binding"/>
    <property type="evidence" value="ECO:0007669"/>
    <property type="project" value="UniProtKB-KW"/>
</dbReference>
<dbReference type="GO" id="GO:0050567">
    <property type="term" value="F:glutaminyl-tRNA synthase (glutamine-hydrolyzing) activity"/>
    <property type="evidence" value="ECO:0007669"/>
    <property type="project" value="UniProtKB-UniRule"/>
</dbReference>
<dbReference type="GO" id="GO:0006412">
    <property type="term" value="P:translation"/>
    <property type="evidence" value="ECO:0007669"/>
    <property type="project" value="UniProtKB-UniRule"/>
</dbReference>
<dbReference type="Gene3D" id="3.90.1300.10">
    <property type="entry name" value="Amidase signature (AS) domain"/>
    <property type="match status" value="1"/>
</dbReference>
<dbReference type="HAMAP" id="MF_00120">
    <property type="entry name" value="GatA"/>
    <property type="match status" value="1"/>
</dbReference>
<dbReference type="InterPro" id="IPR000120">
    <property type="entry name" value="Amidase"/>
</dbReference>
<dbReference type="InterPro" id="IPR020556">
    <property type="entry name" value="Amidase_CS"/>
</dbReference>
<dbReference type="InterPro" id="IPR023631">
    <property type="entry name" value="Amidase_dom"/>
</dbReference>
<dbReference type="InterPro" id="IPR036928">
    <property type="entry name" value="AS_sf"/>
</dbReference>
<dbReference type="InterPro" id="IPR004412">
    <property type="entry name" value="GatA"/>
</dbReference>
<dbReference type="NCBIfam" id="TIGR00132">
    <property type="entry name" value="gatA"/>
    <property type="match status" value="1"/>
</dbReference>
<dbReference type="PANTHER" id="PTHR11895:SF151">
    <property type="entry name" value="GLUTAMYL-TRNA(GLN) AMIDOTRANSFERASE SUBUNIT A"/>
    <property type="match status" value="1"/>
</dbReference>
<dbReference type="PANTHER" id="PTHR11895">
    <property type="entry name" value="TRANSAMIDASE"/>
    <property type="match status" value="1"/>
</dbReference>
<dbReference type="Pfam" id="PF01425">
    <property type="entry name" value="Amidase"/>
    <property type="match status" value="1"/>
</dbReference>
<dbReference type="SUPFAM" id="SSF75304">
    <property type="entry name" value="Amidase signature (AS) enzymes"/>
    <property type="match status" value="1"/>
</dbReference>
<dbReference type="PROSITE" id="PS00571">
    <property type="entry name" value="AMIDASES"/>
    <property type="match status" value="1"/>
</dbReference>
<reference key="1">
    <citation type="journal article" date="2006" name="PLoS Genet.">
        <title>Genome sequence of Rickettsia bellii illuminates the role of amoebae in gene exchanges between intracellular pathogens.</title>
        <authorList>
            <person name="Ogata H."/>
            <person name="La Scola B."/>
            <person name="Audic S."/>
            <person name="Renesto P."/>
            <person name="Blanc G."/>
            <person name="Robert C."/>
            <person name="Fournier P.-E."/>
            <person name="Claverie J.-M."/>
            <person name="Raoult D."/>
        </authorList>
    </citation>
    <scope>NUCLEOTIDE SEQUENCE [LARGE SCALE GENOMIC DNA]</scope>
    <source>
        <strain>RML369-C</strain>
    </source>
</reference>
<comment type="function">
    <text evidence="1">Allows the formation of correctly charged Gln-tRNA(Gln) through the transamidation of misacylated Glu-tRNA(Gln) in organisms which lack glutaminyl-tRNA synthetase. The reaction takes place in the presence of glutamine and ATP through an activated gamma-phospho-Glu-tRNA(Gln).</text>
</comment>
<comment type="catalytic activity">
    <reaction evidence="1">
        <text>L-glutamyl-tRNA(Gln) + L-glutamine + ATP + H2O = L-glutaminyl-tRNA(Gln) + L-glutamate + ADP + phosphate + H(+)</text>
        <dbReference type="Rhea" id="RHEA:17521"/>
        <dbReference type="Rhea" id="RHEA-COMP:9681"/>
        <dbReference type="Rhea" id="RHEA-COMP:9684"/>
        <dbReference type="ChEBI" id="CHEBI:15377"/>
        <dbReference type="ChEBI" id="CHEBI:15378"/>
        <dbReference type="ChEBI" id="CHEBI:29985"/>
        <dbReference type="ChEBI" id="CHEBI:30616"/>
        <dbReference type="ChEBI" id="CHEBI:43474"/>
        <dbReference type="ChEBI" id="CHEBI:58359"/>
        <dbReference type="ChEBI" id="CHEBI:78520"/>
        <dbReference type="ChEBI" id="CHEBI:78521"/>
        <dbReference type="ChEBI" id="CHEBI:456216"/>
        <dbReference type="EC" id="6.3.5.7"/>
    </reaction>
</comment>
<comment type="subunit">
    <text evidence="1">Heterotrimer of A, B and C subunits.</text>
</comment>
<comment type="similarity">
    <text evidence="1">Belongs to the amidase family. GatA subfamily.</text>
</comment>
<accession>Q1RHE9</accession>
<gene>
    <name evidence="1" type="primary">gatA</name>
    <name type="ordered locus">RBE_1134</name>
</gene>
<evidence type="ECO:0000255" key="1">
    <source>
        <dbReference type="HAMAP-Rule" id="MF_00120"/>
    </source>
</evidence>
<name>GATA_RICBR</name>
<keyword id="KW-0067">ATP-binding</keyword>
<keyword id="KW-0436">Ligase</keyword>
<keyword id="KW-0547">Nucleotide-binding</keyword>
<keyword id="KW-0648">Protein biosynthesis</keyword>